<gene>
    <name type="primary">IFT20</name>
</gene>
<dbReference type="EMBL" id="AY224601">
    <property type="protein sequence ID" value="AAP50265.1"/>
    <property type="molecule type" value="mRNA"/>
</dbReference>
<dbReference type="EMBL" id="BQ639919">
    <property type="status" value="NOT_ANNOTATED_CDS"/>
    <property type="molecule type" value="mRNA"/>
</dbReference>
<dbReference type="EMBL" id="AC002094">
    <property type="status" value="NOT_ANNOTATED_CDS"/>
    <property type="molecule type" value="Genomic_DNA"/>
</dbReference>
<dbReference type="EMBL" id="BC002640">
    <property type="protein sequence ID" value="AAH02640.1"/>
    <property type="molecule type" value="mRNA"/>
</dbReference>
<dbReference type="EMBL" id="BC038094">
    <property type="protein sequence ID" value="AAH38094.1"/>
    <property type="molecule type" value="mRNA"/>
</dbReference>
<dbReference type="CCDS" id="CCDS32593.1">
    <molecule id="Q8IY31-3"/>
</dbReference>
<dbReference type="CCDS" id="CCDS58533.1">
    <molecule id="Q8IY31-4"/>
</dbReference>
<dbReference type="CCDS" id="CCDS58534.1">
    <molecule id="Q8IY31-1"/>
</dbReference>
<dbReference type="CCDS" id="CCDS58535.1">
    <molecule id="Q8IY31-2"/>
</dbReference>
<dbReference type="RefSeq" id="NP_001254703.1">
    <molecule id="Q8IY31-2"/>
    <property type="nucleotide sequence ID" value="NM_001267774.2"/>
</dbReference>
<dbReference type="RefSeq" id="NP_001254704.1">
    <molecule id="Q8IY31-1"/>
    <property type="nucleotide sequence ID" value="NM_001267775.2"/>
</dbReference>
<dbReference type="RefSeq" id="NP_001254705.1">
    <molecule id="Q8IY31-1"/>
    <property type="nucleotide sequence ID" value="NM_001267776.2"/>
</dbReference>
<dbReference type="RefSeq" id="NP_001254706.1">
    <molecule id="Q8IY31-4"/>
    <property type="nucleotide sequence ID" value="NM_001267777.2"/>
</dbReference>
<dbReference type="RefSeq" id="NP_001254707.1">
    <property type="nucleotide sequence ID" value="NM_001267778.1"/>
</dbReference>
<dbReference type="RefSeq" id="NP_777547.1">
    <molecule id="Q8IY31-3"/>
    <property type="nucleotide sequence ID" value="NM_174887.4"/>
</dbReference>
<dbReference type="SMR" id="Q8IY31"/>
<dbReference type="BioGRID" id="124711">
    <property type="interactions" value="145"/>
</dbReference>
<dbReference type="ComplexPortal" id="CPX-5022">
    <property type="entry name" value="Intraflagellar transport complex B"/>
</dbReference>
<dbReference type="CORUM" id="Q8IY31"/>
<dbReference type="FunCoup" id="Q8IY31">
    <property type="interactions" value="244"/>
</dbReference>
<dbReference type="IntAct" id="Q8IY31">
    <property type="interactions" value="143"/>
</dbReference>
<dbReference type="MINT" id="Q8IY31"/>
<dbReference type="STRING" id="9606.ENSP00000464443"/>
<dbReference type="iPTMnet" id="Q8IY31"/>
<dbReference type="PhosphoSitePlus" id="Q8IY31"/>
<dbReference type="BioMuta" id="IFT20"/>
<dbReference type="DMDM" id="74728279"/>
<dbReference type="jPOST" id="Q8IY31"/>
<dbReference type="MassIVE" id="Q8IY31"/>
<dbReference type="PaxDb" id="9606-ENSP00000464443"/>
<dbReference type="PeptideAtlas" id="Q8IY31"/>
<dbReference type="ProteomicsDB" id="71093">
    <molecule id="Q8IY31-1"/>
</dbReference>
<dbReference type="ProteomicsDB" id="71094">
    <molecule id="Q8IY31-2"/>
</dbReference>
<dbReference type="ProteomicsDB" id="71095">
    <molecule id="Q8IY31-3"/>
</dbReference>
<dbReference type="Pumba" id="Q8IY31"/>
<dbReference type="TopDownProteomics" id="Q8IY31-3">
    <molecule id="Q8IY31-3"/>
</dbReference>
<dbReference type="Antibodypedia" id="13983">
    <property type="antibodies" value="124 antibodies from 21 providers"/>
</dbReference>
<dbReference type="DNASU" id="90410"/>
<dbReference type="Ensembl" id="ENST00000357896.7">
    <molecule id="Q8IY31-3"/>
    <property type="protein sequence ID" value="ENSP00000350570.3"/>
    <property type="gene ID" value="ENSG00000109083.14"/>
</dbReference>
<dbReference type="Ensembl" id="ENST00000395418.8">
    <molecule id="Q8IY31-1"/>
    <property type="protein sequence ID" value="ENSP00000378809.3"/>
    <property type="gene ID" value="ENSG00000109083.14"/>
</dbReference>
<dbReference type="Ensembl" id="ENST00000579419.5">
    <molecule id="Q8IY31-4"/>
    <property type="protein sequence ID" value="ENSP00000463322.1"/>
    <property type="gene ID" value="ENSG00000109083.14"/>
</dbReference>
<dbReference type="Ensembl" id="ENST00000585089.5">
    <molecule id="Q8IY31-2"/>
    <property type="protein sequence ID" value="ENSP00000464443.1"/>
    <property type="gene ID" value="ENSG00000109083.14"/>
</dbReference>
<dbReference type="Ensembl" id="ENST00000585313.5">
    <molecule id="Q8IY31-1"/>
    <property type="protein sequence ID" value="ENSP00000463138.1"/>
    <property type="gene ID" value="ENSG00000109083.14"/>
</dbReference>
<dbReference type="GeneID" id="90410"/>
<dbReference type="KEGG" id="hsa:90410"/>
<dbReference type="MANE-Select" id="ENST00000395418.8">
    <property type="protein sequence ID" value="ENSP00000378809.3"/>
    <property type="RefSeq nucleotide sequence ID" value="NM_001267776.2"/>
    <property type="RefSeq protein sequence ID" value="NP_001254705.1"/>
</dbReference>
<dbReference type="UCSC" id="uc002hau.3">
    <molecule id="Q8IY31-1"/>
    <property type="organism name" value="human"/>
</dbReference>
<dbReference type="AGR" id="HGNC:30989"/>
<dbReference type="CTD" id="90410"/>
<dbReference type="DisGeNET" id="90410"/>
<dbReference type="GeneCards" id="IFT20"/>
<dbReference type="HGNC" id="HGNC:30989">
    <property type="gene designation" value="IFT20"/>
</dbReference>
<dbReference type="HPA" id="ENSG00000109083">
    <property type="expression patterns" value="Low tissue specificity"/>
</dbReference>
<dbReference type="MIM" id="614394">
    <property type="type" value="gene"/>
</dbReference>
<dbReference type="neXtProt" id="NX_Q8IY31"/>
<dbReference type="OpenTargets" id="ENSG00000109083"/>
<dbReference type="PharmGKB" id="PA142671663"/>
<dbReference type="VEuPathDB" id="HostDB:ENSG00000109083"/>
<dbReference type="eggNOG" id="ENOG502RYYR">
    <property type="taxonomic scope" value="Eukaryota"/>
</dbReference>
<dbReference type="GeneTree" id="ENSGT00390000003413"/>
<dbReference type="HOGENOM" id="CLU_1758238_0_0_1"/>
<dbReference type="InParanoid" id="Q8IY31"/>
<dbReference type="OMA" id="TMAKQRQ"/>
<dbReference type="OrthoDB" id="10254896at2759"/>
<dbReference type="PAN-GO" id="Q8IY31">
    <property type="GO annotations" value="7 GO annotations based on evolutionary models"/>
</dbReference>
<dbReference type="PhylomeDB" id="Q8IY31"/>
<dbReference type="TreeFam" id="TF319434"/>
<dbReference type="PathwayCommons" id="Q8IY31"/>
<dbReference type="Reactome" id="R-HSA-5620924">
    <property type="pathway name" value="Intraflagellar transport"/>
</dbReference>
<dbReference type="SignaLink" id="Q8IY31"/>
<dbReference type="BioGRID-ORCS" id="90410">
    <property type="hits" value="14 hits in 1151 CRISPR screens"/>
</dbReference>
<dbReference type="ChiTaRS" id="IFT20">
    <property type="organism name" value="human"/>
</dbReference>
<dbReference type="GeneWiki" id="IFT20"/>
<dbReference type="GenomeRNAi" id="90410"/>
<dbReference type="Pharos" id="Q8IY31">
    <property type="development level" value="Tbio"/>
</dbReference>
<dbReference type="PRO" id="PR:Q8IY31"/>
<dbReference type="Proteomes" id="UP000005640">
    <property type="component" value="Chromosome 17"/>
</dbReference>
<dbReference type="RNAct" id="Q8IY31">
    <property type="molecule type" value="protein"/>
</dbReference>
<dbReference type="Bgee" id="ENSG00000109083">
    <property type="expression patterns" value="Expressed in body of pancreas and 214 other cell types or tissues"/>
</dbReference>
<dbReference type="ExpressionAtlas" id="Q8IY31">
    <property type="expression patterns" value="baseline and differential"/>
</dbReference>
<dbReference type="GO" id="GO:0001669">
    <property type="term" value="C:acrosomal vesicle"/>
    <property type="evidence" value="ECO:0000250"/>
    <property type="project" value="UniProtKB"/>
</dbReference>
<dbReference type="GO" id="GO:0005814">
    <property type="term" value="C:centriole"/>
    <property type="evidence" value="ECO:0007669"/>
    <property type="project" value="UniProtKB-SubCell"/>
</dbReference>
<dbReference type="GO" id="GO:0005813">
    <property type="term" value="C:centrosome"/>
    <property type="evidence" value="ECO:0000314"/>
    <property type="project" value="MGI"/>
</dbReference>
<dbReference type="GO" id="GO:0036064">
    <property type="term" value="C:ciliary basal body"/>
    <property type="evidence" value="ECO:0000314"/>
    <property type="project" value="UniProtKB"/>
</dbReference>
<dbReference type="GO" id="GO:0097546">
    <property type="term" value="C:ciliary base"/>
    <property type="evidence" value="ECO:0000314"/>
    <property type="project" value="UniProtKB"/>
</dbReference>
<dbReference type="GO" id="GO:0097542">
    <property type="term" value="C:ciliary tip"/>
    <property type="evidence" value="ECO:0000304"/>
    <property type="project" value="Reactome"/>
</dbReference>
<dbReference type="GO" id="GO:0005929">
    <property type="term" value="C:cilium"/>
    <property type="evidence" value="ECO:0000250"/>
    <property type="project" value="UniProtKB"/>
</dbReference>
<dbReference type="GO" id="GO:0005801">
    <property type="term" value="C:cis-Golgi network"/>
    <property type="evidence" value="ECO:0000314"/>
    <property type="project" value="SYSCILIA_CCNET"/>
</dbReference>
<dbReference type="GO" id="GO:0005737">
    <property type="term" value="C:cytoplasm"/>
    <property type="evidence" value="ECO:0000250"/>
    <property type="project" value="UniProtKB"/>
</dbReference>
<dbReference type="GO" id="GO:0044292">
    <property type="term" value="C:dendrite terminus"/>
    <property type="evidence" value="ECO:0007669"/>
    <property type="project" value="Ensembl"/>
</dbReference>
<dbReference type="GO" id="GO:0005794">
    <property type="term" value="C:Golgi apparatus"/>
    <property type="evidence" value="ECO:0000250"/>
    <property type="project" value="UniProtKB"/>
</dbReference>
<dbReference type="GO" id="GO:0000139">
    <property type="term" value="C:Golgi membrane"/>
    <property type="evidence" value="ECO:0000304"/>
    <property type="project" value="Reactome"/>
</dbReference>
<dbReference type="GO" id="GO:0030990">
    <property type="term" value="C:intraciliary transport particle"/>
    <property type="evidence" value="ECO:0000318"/>
    <property type="project" value="GO_Central"/>
</dbReference>
<dbReference type="GO" id="GO:0030992">
    <property type="term" value="C:intraciliary transport particle B"/>
    <property type="evidence" value="ECO:0000353"/>
    <property type="project" value="ComplexPortal"/>
</dbReference>
<dbReference type="GO" id="GO:1902636">
    <property type="term" value="C:kinociliary basal body"/>
    <property type="evidence" value="ECO:0007669"/>
    <property type="project" value="Ensembl"/>
</dbReference>
<dbReference type="GO" id="GO:0002177">
    <property type="term" value="C:manchette"/>
    <property type="evidence" value="ECO:0000250"/>
    <property type="project" value="UniProtKB"/>
</dbReference>
<dbReference type="GO" id="GO:0005902">
    <property type="term" value="C:microvillus"/>
    <property type="evidence" value="ECO:0007669"/>
    <property type="project" value="Ensembl"/>
</dbReference>
<dbReference type="GO" id="GO:0031514">
    <property type="term" value="C:motile cilium"/>
    <property type="evidence" value="ECO:0007669"/>
    <property type="project" value="Ensembl"/>
</dbReference>
<dbReference type="GO" id="GO:0043005">
    <property type="term" value="C:neuron projection"/>
    <property type="evidence" value="ECO:0000318"/>
    <property type="project" value="GO_Central"/>
</dbReference>
<dbReference type="GO" id="GO:0097730">
    <property type="term" value="C:non-motile cilium"/>
    <property type="evidence" value="ECO:0000318"/>
    <property type="project" value="GO_Central"/>
</dbReference>
<dbReference type="GO" id="GO:0032391">
    <property type="term" value="C:photoreceptor connecting cilium"/>
    <property type="evidence" value="ECO:0000314"/>
    <property type="project" value="UniProtKB"/>
</dbReference>
<dbReference type="GO" id="GO:0001750">
    <property type="term" value="C:photoreceptor outer segment"/>
    <property type="evidence" value="ECO:0007669"/>
    <property type="project" value="Ensembl"/>
</dbReference>
<dbReference type="GO" id="GO:0032420">
    <property type="term" value="C:stereocilium"/>
    <property type="evidence" value="ECO:0007669"/>
    <property type="project" value="Ensembl"/>
</dbReference>
<dbReference type="GO" id="GO:0002046">
    <property type="term" value="F:opsin binding"/>
    <property type="evidence" value="ECO:0007669"/>
    <property type="project" value="Ensembl"/>
</dbReference>
<dbReference type="GO" id="GO:0031267">
    <property type="term" value="F:small GTPase binding"/>
    <property type="evidence" value="ECO:0000353"/>
    <property type="project" value="ParkinsonsUK-UCL"/>
</dbReference>
<dbReference type="GO" id="GO:0055007">
    <property type="term" value="P:cardiac muscle cell differentiation"/>
    <property type="evidence" value="ECO:0007669"/>
    <property type="project" value="Ensembl"/>
</dbReference>
<dbReference type="GO" id="GO:0051642">
    <property type="term" value="P:centrosome localization"/>
    <property type="evidence" value="ECO:0007669"/>
    <property type="project" value="Ensembl"/>
</dbReference>
<dbReference type="GO" id="GO:0060271">
    <property type="term" value="P:cilium assembly"/>
    <property type="evidence" value="ECO:0000315"/>
    <property type="project" value="UniProtKB"/>
</dbReference>
<dbReference type="GO" id="GO:0090102">
    <property type="term" value="P:cochlea development"/>
    <property type="evidence" value="ECO:0007669"/>
    <property type="project" value="Ensembl"/>
</dbReference>
<dbReference type="GO" id="GO:0045198">
    <property type="term" value="P:establishment of epithelial cell apical/basal polarity"/>
    <property type="evidence" value="ECO:0007669"/>
    <property type="project" value="Ensembl"/>
</dbReference>
<dbReference type="GO" id="GO:0001736">
    <property type="term" value="P:establishment of planar polarity"/>
    <property type="evidence" value="ECO:0007669"/>
    <property type="project" value="Ensembl"/>
</dbReference>
<dbReference type="GO" id="GO:0060122">
    <property type="term" value="P:inner ear receptor cell stereocilium organization"/>
    <property type="evidence" value="ECO:0007669"/>
    <property type="project" value="Ensembl"/>
</dbReference>
<dbReference type="GO" id="GO:0035720">
    <property type="term" value="P:intraciliary anterograde transport"/>
    <property type="evidence" value="ECO:0000303"/>
    <property type="project" value="ComplexPortal"/>
</dbReference>
<dbReference type="GO" id="GO:0001822">
    <property type="term" value="P:kidney development"/>
    <property type="evidence" value="ECO:0007669"/>
    <property type="project" value="Ensembl"/>
</dbReference>
<dbReference type="GO" id="GO:0061351">
    <property type="term" value="P:neural precursor cell proliferation"/>
    <property type="evidence" value="ECO:0007669"/>
    <property type="project" value="Ensembl"/>
</dbReference>
<dbReference type="GO" id="GO:0036372">
    <property type="term" value="P:opsin transport"/>
    <property type="evidence" value="ECO:0007669"/>
    <property type="project" value="Ensembl"/>
</dbReference>
<dbReference type="GO" id="GO:0035845">
    <property type="term" value="P:photoreceptor cell outer segment organization"/>
    <property type="evidence" value="ECO:0007669"/>
    <property type="project" value="Ensembl"/>
</dbReference>
<dbReference type="GO" id="GO:0045724">
    <property type="term" value="P:positive regulation of cilium assembly"/>
    <property type="evidence" value="ECO:0000315"/>
    <property type="project" value="UniProtKB"/>
</dbReference>
<dbReference type="GO" id="GO:0061512">
    <property type="term" value="P:protein localization to cilium"/>
    <property type="evidence" value="ECO:0000318"/>
    <property type="project" value="GO_Central"/>
</dbReference>
<dbReference type="GO" id="GO:0034067">
    <property type="term" value="P:protein localization to Golgi apparatus"/>
    <property type="evidence" value="ECO:0000315"/>
    <property type="project" value="MGI"/>
</dbReference>
<dbReference type="GO" id="GO:0072659">
    <property type="term" value="P:protein localization to plasma membrane"/>
    <property type="evidence" value="ECO:0007669"/>
    <property type="project" value="Ensembl"/>
</dbReference>
<dbReference type="GO" id="GO:0071806">
    <property type="term" value="P:protein transmembrane transport"/>
    <property type="evidence" value="ECO:0007669"/>
    <property type="project" value="Ensembl"/>
</dbReference>
<dbReference type="GO" id="GO:2000785">
    <property type="term" value="P:regulation of autophagosome assembly"/>
    <property type="evidence" value="ECO:0000250"/>
    <property type="project" value="UniProtKB"/>
</dbReference>
<dbReference type="GO" id="GO:0060828">
    <property type="term" value="P:regulation of canonical Wnt signaling pathway"/>
    <property type="evidence" value="ECO:0007669"/>
    <property type="project" value="Ensembl"/>
</dbReference>
<dbReference type="GO" id="GO:1902017">
    <property type="term" value="P:regulation of cilium assembly"/>
    <property type="evidence" value="ECO:0000250"/>
    <property type="project" value="UniProtKB"/>
</dbReference>
<dbReference type="GO" id="GO:2000583">
    <property type="term" value="P:regulation of platelet-derived growth factor receptor-alpha signaling pathway"/>
    <property type="evidence" value="ECO:0000250"/>
    <property type="project" value="UniProtKB"/>
</dbReference>
<dbReference type="GO" id="GO:0007224">
    <property type="term" value="P:smoothened signaling pathway"/>
    <property type="evidence" value="ECO:0007669"/>
    <property type="project" value="Ensembl"/>
</dbReference>
<dbReference type="GO" id="GO:0007283">
    <property type="term" value="P:spermatogenesis"/>
    <property type="evidence" value="ECO:0000250"/>
    <property type="project" value="UniProtKB"/>
</dbReference>
<dbReference type="GO" id="GO:0008542">
    <property type="term" value="P:visual learning"/>
    <property type="evidence" value="ECO:0007669"/>
    <property type="project" value="Ensembl"/>
</dbReference>
<dbReference type="InterPro" id="IPR028172">
    <property type="entry name" value="FT20"/>
</dbReference>
<dbReference type="PANTHER" id="PTHR31978">
    <property type="entry name" value="INTRAFLAGELLAR TRANSPORT PROTEIN 20 HOMOLOG"/>
    <property type="match status" value="1"/>
</dbReference>
<dbReference type="PANTHER" id="PTHR31978:SF1">
    <property type="entry name" value="INTRAFLAGELLAR TRANSPORT PROTEIN 20 HOMOLOG"/>
    <property type="match status" value="1"/>
</dbReference>
<dbReference type="Pfam" id="PF14931">
    <property type="entry name" value="IFT20"/>
    <property type="match status" value="1"/>
</dbReference>
<evidence type="ECO:0000250" key="1"/>
<evidence type="ECO:0000250" key="2">
    <source>
        <dbReference type="UniProtKB" id="Q61025"/>
    </source>
</evidence>
<evidence type="ECO:0000255" key="3"/>
<evidence type="ECO:0000269" key="4">
    <source>
    </source>
</evidence>
<evidence type="ECO:0000269" key="5">
    <source>
    </source>
</evidence>
<evidence type="ECO:0000269" key="6">
    <source>
    </source>
</evidence>
<evidence type="ECO:0000269" key="7">
    <source>
    </source>
</evidence>
<evidence type="ECO:0000269" key="8">
    <source>
    </source>
</evidence>
<evidence type="ECO:0000269" key="9">
    <source>
    </source>
</evidence>
<evidence type="ECO:0000269" key="10">
    <source>
    </source>
</evidence>
<evidence type="ECO:0000269" key="11">
    <source>
    </source>
</evidence>
<evidence type="ECO:0000303" key="12">
    <source>
    </source>
</evidence>
<evidence type="ECO:0000303" key="13">
    <source>
    </source>
</evidence>
<evidence type="ECO:0000303" key="14">
    <source>
    </source>
</evidence>
<organism>
    <name type="scientific">Homo sapiens</name>
    <name type="common">Human</name>
    <dbReference type="NCBI Taxonomy" id="9606"/>
    <lineage>
        <taxon>Eukaryota</taxon>
        <taxon>Metazoa</taxon>
        <taxon>Chordata</taxon>
        <taxon>Craniata</taxon>
        <taxon>Vertebrata</taxon>
        <taxon>Euteleostomi</taxon>
        <taxon>Mammalia</taxon>
        <taxon>Eutheria</taxon>
        <taxon>Euarchontoglires</taxon>
        <taxon>Primates</taxon>
        <taxon>Haplorrhini</taxon>
        <taxon>Catarrhini</taxon>
        <taxon>Hominidae</taxon>
        <taxon>Homo</taxon>
    </lineage>
</organism>
<sequence length="132" mass="15281">MAKDILGEAGLHFDELNKLRVLDPEVTQQTIELKEECKDFVDKIGQFQKIVGGLIELVDQLAKEAENEKMKAIGARNLLKSIAKQREAQQQQLQALIAEKKMQLERYRVEYEALCKVEAEQNEFIDQFIFQK</sequence>
<reference key="1">
    <citation type="journal article" date="2003" name="Mol. Biol. Rep.">
        <title>Cloning and characterization of the human IFT20 gene.</title>
        <authorList>
            <person name="Yin G."/>
            <person name="Dai J."/>
            <person name="Ji C."/>
            <person name="Ni X."/>
            <person name="Shu G."/>
            <person name="Ye X."/>
            <person name="Dai J."/>
            <person name="Wu Q."/>
            <person name="Gu S."/>
            <person name="Xie Y."/>
            <person name="Zhao R.C."/>
            <person name="Mao Y."/>
        </authorList>
    </citation>
    <scope>NUCLEOTIDE SEQUENCE [MRNA] (ISOFORM 2)</scope>
    <scope>TISSUE SPECIFICITY</scope>
</reference>
<reference key="2">
    <citation type="journal article" date="2002" name="Mol. Vis.">
        <title>Expressed sequence tag analysis of human retina for the NEIBank project: retbindin, an abundant, novel retinal cDNA and alternative splicing of other retina-preferred gene transcripts.</title>
        <authorList>
            <person name="Wistow G."/>
            <person name="Berstein S.L."/>
            <person name="Wyatt M.K."/>
            <person name="Ray S."/>
            <person name="Behal A."/>
            <person name="Touchman J.W."/>
            <person name="Bouffard G."/>
            <person name="Smith D."/>
            <person name="Peterson K."/>
        </authorList>
    </citation>
    <scope>NUCLEOTIDE SEQUENCE [LARGE SCALE MRNA] (ISOFORM 4)</scope>
</reference>
<reference key="3">
    <citation type="journal article" date="2006" name="Nature">
        <title>DNA sequence of human chromosome 17 and analysis of rearrangement in the human lineage.</title>
        <authorList>
            <person name="Zody M.C."/>
            <person name="Garber M."/>
            <person name="Adams D.J."/>
            <person name="Sharpe T."/>
            <person name="Harrow J."/>
            <person name="Lupski J.R."/>
            <person name="Nicholson C."/>
            <person name="Searle S.M."/>
            <person name="Wilming L."/>
            <person name="Young S.K."/>
            <person name="Abouelleil A."/>
            <person name="Allen N.R."/>
            <person name="Bi W."/>
            <person name="Bloom T."/>
            <person name="Borowsky M.L."/>
            <person name="Bugalter B.E."/>
            <person name="Butler J."/>
            <person name="Chang J.L."/>
            <person name="Chen C.-K."/>
            <person name="Cook A."/>
            <person name="Corum B."/>
            <person name="Cuomo C.A."/>
            <person name="de Jong P.J."/>
            <person name="DeCaprio D."/>
            <person name="Dewar K."/>
            <person name="FitzGerald M."/>
            <person name="Gilbert J."/>
            <person name="Gibson R."/>
            <person name="Gnerre S."/>
            <person name="Goldstein S."/>
            <person name="Grafham D.V."/>
            <person name="Grocock R."/>
            <person name="Hafez N."/>
            <person name="Hagopian D.S."/>
            <person name="Hart E."/>
            <person name="Norman C.H."/>
            <person name="Humphray S."/>
            <person name="Jaffe D.B."/>
            <person name="Jones M."/>
            <person name="Kamal M."/>
            <person name="Khodiyar V.K."/>
            <person name="LaButti K."/>
            <person name="Laird G."/>
            <person name="Lehoczky J."/>
            <person name="Liu X."/>
            <person name="Lokyitsang T."/>
            <person name="Loveland J."/>
            <person name="Lui A."/>
            <person name="Macdonald P."/>
            <person name="Major J.E."/>
            <person name="Matthews L."/>
            <person name="Mauceli E."/>
            <person name="McCarroll S.A."/>
            <person name="Mihalev A.H."/>
            <person name="Mudge J."/>
            <person name="Nguyen C."/>
            <person name="Nicol R."/>
            <person name="O'Leary S.B."/>
            <person name="Osoegawa K."/>
            <person name="Schwartz D.C."/>
            <person name="Shaw-Smith C."/>
            <person name="Stankiewicz P."/>
            <person name="Steward C."/>
            <person name="Swarbreck D."/>
            <person name="Venkataraman V."/>
            <person name="Whittaker C.A."/>
            <person name="Yang X."/>
            <person name="Zimmer A.R."/>
            <person name="Bradley A."/>
            <person name="Hubbard T."/>
            <person name="Birren B.W."/>
            <person name="Rogers J."/>
            <person name="Lander E.S."/>
            <person name="Nusbaum C."/>
        </authorList>
    </citation>
    <scope>NUCLEOTIDE SEQUENCE [LARGE SCALE GENOMIC DNA]</scope>
</reference>
<reference key="4">
    <citation type="journal article" date="2004" name="Genome Res.">
        <title>The status, quality, and expansion of the NIH full-length cDNA project: the Mammalian Gene Collection (MGC).</title>
        <authorList>
            <consortium name="The MGC Project Team"/>
        </authorList>
    </citation>
    <scope>NUCLEOTIDE SEQUENCE [LARGE SCALE MRNA] (ISOFORMS 1 AND 3)</scope>
    <source>
        <tissue>Uterus</tissue>
    </source>
</reference>
<reference key="5">
    <citation type="journal article" date="2006" name="Mol. Biol. Cell">
        <title>The intraflagellar transport protein IFT20 is associated with the Golgi complex and is required for cilia assembly.</title>
        <authorList>
            <person name="Follit J.A."/>
            <person name="Tuft R.A."/>
            <person name="Fogarty K.E."/>
            <person name="Pazour G.J."/>
        </authorList>
    </citation>
    <scope>FUNCTION</scope>
</reference>
<reference key="6">
    <citation type="journal article" date="2007" name="Cell">
        <title>HEF1-dependent Aurora A activation induces disassembly of the primary cilium.</title>
        <authorList>
            <person name="Pugacheva E.N."/>
            <person name="Jablonski S.A."/>
            <person name="Hartman T.R."/>
            <person name="Henske E.P."/>
            <person name="Golemis E.A."/>
        </authorList>
    </citation>
    <scope>FUNCTION</scope>
</reference>
<reference key="7">
    <citation type="journal article" date="2008" name="PLoS Genet.">
        <title>The Golgin GMAP210/TRIP11 anchors IFT20 to the Golgi complex.</title>
        <authorList>
            <person name="Follit J.A."/>
            <person name="San Agustin J.T."/>
            <person name="Xu F."/>
            <person name="Jonassen J.A."/>
            <person name="Samtani R."/>
            <person name="Lo C.W."/>
            <person name="Pazour G.J."/>
        </authorList>
    </citation>
    <scope>INTERACTION WITH TRIP11</scope>
</reference>
<reference key="8">
    <citation type="journal article" date="2010" name="Biol. Reprod.">
        <title>Expression of SPEF2 during mouse spermatogenesis and identification of IFT20 as an interacting protein.</title>
        <authorList>
            <person name="Sironen A."/>
            <person name="Hansen J."/>
            <person name="Thomsen B."/>
            <person name="Andersson M."/>
            <person name="Vilkki J."/>
            <person name="Toppari J."/>
            <person name="Kotaja N."/>
        </authorList>
    </citation>
    <scope>INTERACTION WITH SPEF2</scope>
</reference>
<reference key="9">
    <citation type="journal article" date="2013" name="Proc. Natl. Acad. Sci. U.S.A.">
        <title>CCDC41 is required for ciliary vesicle docking to the mother centriole.</title>
        <authorList>
            <person name="Joo K."/>
            <person name="Kim C.G."/>
            <person name="Lee M.S."/>
            <person name="Moon H.Y."/>
            <person name="Lee S.H."/>
            <person name="Kim M.J."/>
            <person name="Kweon H.S."/>
            <person name="Park W.Y."/>
            <person name="Kim C.H."/>
            <person name="Gleeson J.G."/>
            <person name="Kim J."/>
        </authorList>
    </citation>
    <scope>INTERACTION WITH CEP83</scope>
</reference>
<reference key="10">
    <citation type="journal article" date="2018" name="J. Cell Biol.">
        <title>IFT20 modulates ciliary PDGFRalpha signaling by regulating the stability of Cbl E3 ubiquitin ligases.</title>
        <authorList>
            <person name="Schmid F.M."/>
            <person name="Schou K.B."/>
            <person name="Vilhelm M.J."/>
            <person name="Holm M.S."/>
            <person name="Breslin L."/>
            <person name="Farinelli P."/>
            <person name="Larsen L.A."/>
            <person name="Andersen J.S."/>
            <person name="Pedersen L.B."/>
            <person name="Christensen S.T."/>
        </authorList>
    </citation>
    <scope>FUNCTION</scope>
    <scope>INTERACTION WITH CBL AND CBLB</scope>
</reference>
<reference key="11">
    <citation type="journal article" date="2019" name="Am. J. Hum. Genet.">
        <title>Bi-allelic mutations in TTC21A induce asthenoteratospermia in humans and mice.</title>
        <authorList>
            <person name="Liu W."/>
            <person name="He X."/>
            <person name="Yang S."/>
            <person name="Zouari R."/>
            <person name="Wang J."/>
            <person name="Wu H."/>
            <person name="Kherraf Z.E."/>
            <person name="Liu C."/>
            <person name="Coutton C."/>
            <person name="Zhao R."/>
            <person name="Tang D."/>
            <person name="Tang S."/>
            <person name="Lv M."/>
            <person name="Fang Y."/>
            <person name="Li W."/>
            <person name="Li H."/>
            <person name="Zhao J."/>
            <person name="Wang X."/>
            <person name="Zhao S."/>
            <person name="Zhang J."/>
            <person name="Arnoult C."/>
            <person name="Jin L."/>
            <person name="Zhang Z."/>
            <person name="Ray P.F."/>
            <person name="Cao Y."/>
            <person name="Zhang F."/>
        </authorList>
    </citation>
    <scope>INTERACTION WITH TTC21A</scope>
</reference>
<reference key="12">
    <citation type="journal article" date="2019" name="Front. Cell Dev. Biol.">
        <title>SANS (USH1G) Molecularly Links the Human Usher Syndrome Protein Network to the Intraflagellar Transport Module by Direct Binding to IFT-B Proteins.</title>
        <authorList>
            <person name="Sorusch N."/>
            <person name="Yildirim A."/>
            <person name="Knapp B."/>
            <person name="Janson J."/>
            <person name="Fleck W."/>
            <person name="Scharf C."/>
            <person name="Wolfrum U."/>
        </authorList>
    </citation>
    <scope>INTERACTION WITH USH1G</scope>
</reference>
<proteinExistence type="evidence at protein level"/>
<keyword id="KW-0025">Alternative splicing</keyword>
<keyword id="KW-0966">Cell projection</keyword>
<keyword id="KW-0969">Cilium</keyword>
<keyword id="KW-0970">Cilium biogenesis/degradation</keyword>
<keyword id="KW-0175">Coiled coil</keyword>
<keyword id="KW-0963">Cytoplasm</keyword>
<keyword id="KW-0968">Cytoplasmic vesicle</keyword>
<keyword id="KW-0206">Cytoskeleton</keyword>
<keyword id="KW-0221">Differentiation</keyword>
<keyword id="KW-0333">Golgi apparatus</keyword>
<keyword id="KW-1267">Proteomics identification</keyword>
<keyword id="KW-1185">Reference proteome</keyword>
<keyword id="KW-0744">Spermatogenesis</keyword>
<comment type="function">
    <text evidence="2 5 6 10">Part of intraflagellar transport (IFT) particles involved in ciliary process assembly (PubMed:17604723). May play a role in the trafficking of ciliary membrane proteins from the Golgi complex to the cilium (PubMed:16775004). Regulates the platelet-derived growth factor receptor-alpha (PDGFRA) signaling pathway. Required for protein stability of E3 ubiquitin ligases CBL and CBLB that mediate ubiquitination and internalization of PDGFRA for proper feedback inhibition of PDGFRA signaling (PubMed:29237719). Essential for male fertility. Plays an important role in spermatogenesis, particularly spermiogenesis, when germ cells form flagella. May play a role in the transport of flagellar proteins ODF2 and SPAG16 to build sperm flagella and in the removal of redundant sperm cytoplasm (By similarity). Also involved in autophagy since it is required for trafficking of ATG16L and the expansion of the autophagic compartment (By similarity).</text>
</comment>
<comment type="subunit">
    <text evidence="2 7 8 9 10 11">Component of the IFT complex B, at least composed of IFT20, IFT22, IFT25, IFT27, IFT46, IFT52, TRAF3IP1/IFT54, IFT57, IFT74, IFT80, IFT81, and IFT88. Interacts directly with IFT57 and KIF3B/Kinesin II subunit (By similarity). Interacts with IFT88 (By similarity). Interacts with CEP83 (PubMed:23530209). Interacts with SPEF2 (via C-terminus) (PubMed:19889948). Interacts with CBL and CBLB (PubMed:29237719). Interacts with TRIP11 (PubMed:19112494). Interacts with TTC21A (PubMed:30929735). Interacts with SPATA1 (By similarity). Interacts with USH1G (PubMed:31637240). Interacts with CCDC146 (By similarity). Interacts with CEP78; regulating IFT20 stability and localization (By similarity).</text>
</comment>
<comment type="interaction">
    <interactant intactId="EBI-744203">
        <id>Q8IY31</id>
    </interactant>
    <interactant intactId="EBI-743598">
        <id>Q9NYB9</id>
        <label>ABI2</label>
    </interactant>
    <organismsDiffer>false</organismsDiffer>
    <experiments>6</experiments>
</comment>
<comment type="interaction">
    <interactant intactId="EBI-744203">
        <id>Q8IY31</id>
    </interactant>
    <interactant intactId="EBI-2872397">
        <id>Q86T23</id>
        <label>CROCCP2</label>
    </interactant>
    <organismsDiffer>false</organismsDiffer>
    <experiments>3</experiments>
</comment>
<comment type="interaction">
    <interactant intactId="EBI-744203">
        <id>Q8IY31</id>
    </interactant>
    <interactant intactId="EBI-748597">
        <id>Q05D60</id>
        <label>DEUP1</label>
    </interactant>
    <organismsDiffer>false</organismsDiffer>
    <experiments>4</experiments>
</comment>
<comment type="interaction">
    <interactant intactId="EBI-744203">
        <id>Q8IY31</id>
    </interactant>
    <interactant intactId="EBI-465804">
        <id>Q96EV8</id>
        <label>DTNBP1</label>
    </interactant>
    <organismsDiffer>false</organismsDiffer>
    <experiments>3</experiments>
</comment>
<comment type="interaction">
    <interactant intactId="EBI-744203">
        <id>Q8IY31</id>
    </interactant>
    <interactant intactId="EBI-744586">
        <id>Q9Y6C2</id>
        <label>EMILIN1</label>
    </interactant>
    <organismsDiffer>false</organismsDiffer>
    <experiments>6</experiments>
</comment>
<comment type="interaction">
    <interactant intactId="EBI-744203">
        <id>Q8IY31</id>
    </interactant>
    <interactant intactId="EBI-720048">
        <id>Q9UPT5</id>
        <label>EXOC7</label>
    </interactant>
    <organismsDiffer>false</organismsDiffer>
    <experiments>5</experiments>
</comment>
<comment type="interaction">
    <interactant intactId="EBI-744203">
        <id>Q8IY31</id>
    </interactant>
    <interactant intactId="EBI-5661036">
        <id>A1L4K1</id>
        <label>FSD2</label>
    </interactant>
    <organismsDiffer>false</organismsDiffer>
    <experiments>3</experiments>
</comment>
<comment type="interaction">
    <interactant intactId="EBI-744203">
        <id>Q8IY31</id>
    </interactant>
    <interactant intactId="EBI-618309">
        <id>Q08379</id>
        <label>GOLGA2</label>
    </interactant>
    <organismsDiffer>false</organismsDiffer>
    <experiments>3</experiments>
</comment>
<comment type="interaction">
    <interactant intactId="EBI-744203">
        <id>Q8IY31</id>
    </interactant>
    <interactant intactId="EBI-2514791">
        <id>Q96CS2</id>
        <label>HAUS1</label>
    </interactant>
    <organismsDiffer>false</organismsDiffer>
    <experiments>7</experiments>
</comment>
<comment type="interaction">
    <interactant intactId="EBI-744203">
        <id>Q8IY31</id>
    </interactant>
    <interactant intactId="EBI-10171552">
        <id>A1A4E9</id>
        <label>KRT13</label>
    </interactant>
    <organismsDiffer>false</organismsDiffer>
    <experiments>3</experiments>
</comment>
<comment type="interaction">
    <interactant intactId="EBI-744203">
        <id>Q8IY31</id>
    </interactant>
    <interactant intactId="EBI-739657">
        <id>Q9BQD3</id>
        <label>KXD1</label>
    </interactant>
    <organismsDiffer>false</organismsDiffer>
    <experiments>6</experiments>
</comment>
<comment type="interaction">
    <interactant intactId="EBI-744203">
        <id>Q8IY31</id>
    </interactant>
    <interactant intactId="EBI-394607">
        <id>Q9NPJ6</id>
        <label>MED4</label>
    </interactant>
    <organismsDiffer>false</organismsDiffer>
    <experiments>6</experiments>
</comment>
<comment type="interaction">
    <interactant intactId="EBI-744203">
        <id>Q8IY31</id>
    </interactant>
    <interactant intactId="EBI-715849">
        <id>O14777</id>
        <label>NDC80</label>
    </interactant>
    <organismsDiffer>false</organismsDiffer>
    <experiments>5</experiments>
</comment>
<comment type="interaction">
    <interactant intactId="EBI-744203">
        <id>Q8IY31</id>
    </interactant>
    <interactant intactId="EBI-741048">
        <id>Q7Z3B4</id>
        <label>NUP54</label>
    </interactant>
    <organismsDiffer>false</organismsDiffer>
    <experiments>3</experiments>
</comment>
<comment type="interaction">
    <interactant intactId="EBI-744203">
        <id>Q8IY31</id>
    </interactant>
    <interactant intactId="EBI-347978">
        <id>P37198</id>
        <label>NUP62</label>
    </interactant>
    <organismsDiffer>false</organismsDiffer>
    <experiments>3</experiments>
</comment>
<comment type="interaction">
    <interactant intactId="EBI-744203">
        <id>Q8IY31</id>
    </interactant>
    <interactant intactId="EBI-359352">
        <id>P25786</id>
        <label>PSMA1</label>
    </interactant>
    <organismsDiffer>false</organismsDiffer>
    <experiments>3</experiments>
</comment>
<comment type="interaction">
    <interactant intactId="EBI-744203">
        <id>Q8IY31</id>
    </interactant>
    <interactant intactId="EBI-739895">
        <id>Q8N6Y0</id>
        <label>USHBP1</label>
    </interactant>
    <organismsDiffer>false</organismsDiffer>
    <experiments>3</experiments>
</comment>
<comment type="interaction">
    <interactant intactId="EBI-744203">
        <id>Q8IY31</id>
    </interactant>
    <interactant intactId="EBI-712969">
        <id>Q9Y3C0</id>
        <label>WASHC3</label>
    </interactant>
    <organismsDiffer>false</organismsDiffer>
    <experiments>4</experiments>
</comment>
<comment type="interaction">
    <interactant intactId="EBI-11742277">
        <id>Q8IY31-2</id>
    </interactant>
    <interactant intactId="EBI-348399">
        <id>P22607</id>
        <label>FGFR3</label>
    </interactant>
    <organismsDiffer>false</organismsDiffer>
    <experiments>3</experiments>
</comment>
<comment type="interaction">
    <interactant intactId="EBI-11742277">
        <id>Q8IY31-2</id>
    </interactant>
    <interactant intactId="EBI-744302">
        <id>P14136</id>
        <label>GFAP</label>
    </interactant>
    <organismsDiffer>false</organismsDiffer>
    <experiments>3</experiments>
</comment>
<comment type="interaction">
    <interactant intactId="EBI-11742277">
        <id>Q8IY31-2</id>
    </interactant>
    <interactant intactId="EBI-351506">
        <id>P06396</id>
        <label>GSN</label>
    </interactant>
    <organismsDiffer>false</organismsDiffer>
    <experiments>3</experiments>
</comment>
<comment type="interaction">
    <interactant intactId="EBI-11742277">
        <id>Q8IY31-2</id>
    </interactant>
    <interactant intactId="EBI-350145">
        <id>P01112</id>
        <label>HRAS</label>
    </interactant>
    <organismsDiffer>false</organismsDiffer>
    <experiments>3</experiments>
</comment>
<comment type="interaction">
    <interactant intactId="EBI-11742277">
        <id>Q8IY31-2</id>
    </interactant>
    <interactant intactId="EBI-517086">
        <id>O43464</id>
        <label>HTRA2</label>
    </interactant>
    <organismsDiffer>false</organismsDiffer>
    <experiments>3</experiments>
</comment>
<comment type="interaction">
    <interactant intactId="EBI-11742277">
        <id>Q8IY31-2</id>
    </interactant>
    <interactant intactId="EBI-466029">
        <id>P42858</id>
        <label>HTT</label>
    </interactant>
    <organismsDiffer>false</organismsDiffer>
    <experiments>6</experiments>
</comment>
<comment type="interaction">
    <interactant intactId="EBI-11742277">
        <id>Q8IY31-2</id>
    </interactant>
    <interactant intactId="EBI-948266">
        <id>O14901</id>
        <label>KLF11</label>
    </interactant>
    <organismsDiffer>false</organismsDiffer>
    <experiments>3</experiments>
</comment>
<comment type="interaction">
    <interactant intactId="EBI-11742277">
        <id>Q8IY31-2</id>
    </interactant>
    <interactant intactId="EBI-2811583">
        <id>Q9BVL2</id>
        <label>NUP58</label>
    </interactant>
    <organismsDiffer>false</organismsDiffer>
    <experiments>3</experiments>
</comment>
<comment type="interaction">
    <interactant intactId="EBI-11742277">
        <id>Q8IY31-2</id>
    </interactant>
    <interactant intactId="EBI-752074">
        <id>P41219</id>
        <label>PRPH</label>
    </interactant>
    <organismsDiffer>false</organismsDiffer>
    <experiments>3</experiments>
</comment>
<comment type="interaction">
    <interactant intactId="EBI-11742277">
        <id>Q8IY31-2</id>
    </interactant>
    <interactant intactId="EBI-25900580">
        <id>Q9Y649</id>
    </interactant>
    <organismsDiffer>false</organismsDiffer>
    <experiments>3</experiments>
</comment>
<comment type="interaction">
    <interactant intactId="EBI-9091197">
        <id>Q8IY31-3</id>
    </interactant>
    <interactant intactId="EBI-11096309">
        <id>Q9NYB9-2</id>
        <label>ABI2</label>
    </interactant>
    <organismsDiffer>false</organismsDiffer>
    <experiments>7</experiments>
</comment>
<comment type="interaction">
    <interactant intactId="EBI-9091197">
        <id>Q8IY31-3</id>
    </interactant>
    <interactant intactId="EBI-742038">
        <id>Q9P2A4</id>
        <label>ABI3</label>
    </interactant>
    <organismsDiffer>false</organismsDiffer>
    <experiments>3</experiments>
</comment>
<comment type="interaction">
    <interactant intactId="EBI-9091197">
        <id>Q8IY31-3</id>
    </interactant>
    <interactant intactId="EBI-745213">
        <id>P29972</id>
        <label>AQP1</label>
    </interactant>
    <organismsDiffer>false</organismsDiffer>
    <experiments>3</experiments>
</comment>
<comment type="interaction">
    <interactant intactId="EBI-9091197">
        <id>Q8IY31-3</id>
    </interactant>
    <interactant intactId="EBI-930964">
        <id>P54253</id>
        <label>ATXN1</label>
    </interactant>
    <organismsDiffer>false</organismsDiffer>
    <experiments>3</experiments>
</comment>
<comment type="interaction">
    <interactant intactId="EBI-9091197">
        <id>Q8IY31-3</id>
    </interactant>
    <interactant intactId="EBI-465781">
        <id>Q9UL45</id>
        <label>BLOC1S6</label>
    </interactant>
    <organismsDiffer>false</organismsDiffer>
    <experiments>3</experiments>
</comment>
<comment type="interaction">
    <interactant intactId="EBI-9091197">
        <id>Q8IY31-3</id>
    </interactant>
    <interactant intactId="EBI-2837444">
        <id>Q8WUW1</id>
        <label>BRK1</label>
    </interactant>
    <organismsDiffer>false</organismsDiffer>
    <experiments>3</experiments>
</comment>
<comment type="interaction">
    <interactant intactId="EBI-9091197">
        <id>Q8IY31-3</id>
    </interactant>
    <interactant intactId="EBI-747505">
        <id>Q8TAB5</id>
        <label>C1orf216</label>
    </interactant>
    <organismsDiffer>false</organismsDiffer>
    <experiments>3</experiments>
</comment>
<comment type="interaction">
    <interactant intactId="EBI-9091197">
        <id>Q8IY31-3</id>
    </interactant>
    <interactant intactId="EBI-10175300">
        <id>Q8TD31-3</id>
        <label>CCHCR1</label>
    </interactant>
    <organismsDiffer>false</organismsDiffer>
    <experiments>3</experiments>
</comment>
<comment type="interaction">
    <interactant intactId="EBI-9091197">
        <id>Q8IY31-3</id>
    </interactant>
    <interactant intactId="EBI-12300031">
        <id>Q9NNX6-10</id>
        <label>CD209</label>
    </interactant>
    <organismsDiffer>false</organismsDiffer>
    <experiments>3</experiments>
</comment>
<comment type="interaction">
    <interactant intactId="EBI-9091197">
        <id>Q8IY31-3</id>
    </interactant>
    <interactant intactId="EBI-1391211">
        <id>Q9H2X3</id>
        <label>CLEC4M</label>
    </interactant>
    <organismsDiffer>false</organismsDiffer>
    <experiments>3</experiments>
</comment>
<comment type="interaction">
    <interactant intactId="EBI-9091197">
        <id>Q8IY31-3</id>
    </interactant>
    <interactant intactId="EBI-3248760">
        <id>Q13286</id>
        <label>CLN3</label>
    </interactant>
    <organismsDiffer>false</organismsDiffer>
    <experiments>3</experiments>
</comment>
<comment type="interaction">
    <interactant intactId="EBI-9091197">
        <id>Q8IY31-3</id>
    </interactant>
    <interactant intactId="EBI-1046676">
        <id>P31146</id>
        <label>CORO1A</label>
    </interactant>
    <organismsDiffer>false</organismsDiffer>
    <experiments>3</experiments>
</comment>
<comment type="interaction">
    <interactant intactId="EBI-9091197">
        <id>Q8IY31-3</id>
    </interactant>
    <interactant intactId="EBI-25840379">
        <id>Q14203-5</id>
        <label>DCTN1</label>
    </interactant>
    <organismsDiffer>false</organismsDiffer>
    <experiments>3</experiments>
</comment>
<comment type="interaction">
    <interactant intactId="EBI-9091197">
        <id>Q8IY31-3</id>
    </interactant>
    <interactant intactId="EBI-11988027">
        <id>Q9NRI5-2</id>
        <label>DISC1</label>
    </interactant>
    <organismsDiffer>false</organismsDiffer>
    <experiments>3</experiments>
</comment>
<comment type="interaction">
    <interactant intactId="EBI-9091197">
        <id>Q8IY31-3</id>
    </interactant>
    <interactant intactId="EBI-11748557">
        <id>Q9Y6C2-2</id>
        <label>EMILIN1</label>
    </interactant>
    <organismsDiffer>false</organismsDiffer>
    <experiments>5</experiments>
</comment>
<comment type="interaction">
    <interactant intactId="EBI-9091197">
        <id>Q8IY31-3</id>
    </interactant>
    <interactant intactId="EBI-10290827">
        <id>Q96LP2</id>
        <label>FAM81B</label>
    </interactant>
    <organismsDiffer>false</organismsDiffer>
    <experiments>3</experiments>
</comment>
<comment type="interaction">
    <interactant intactId="EBI-9091197">
        <id>Q8IY31-3</id>
    </interactant>
    <interactant intactId="EBI-1955541">
        <id>Q53GS7</id>
        <label>GLE1</label>
    </interactant>
    <organismsDiffer>false</organismsDiffer>
    <experiments>3</experiments>
</comment>
<comment type="interaction">
    <interactant intactId="EBI-9091197">
        <id>Q8IY31-3</id>
    </interactant>
    <interactant intactId="EBI-466029">
        <id>P42858</id>
        <label>HTT</label>
    </interactant>
    <organismsDiffer>false</organismsDiffer>
    <experiments>18</experiments>
</comment>
<comment type="interaction">
    <interactant intactId="EBI-9091197">
        <id>Q8IY31-3</id>
    </interactant>
    <interactant intactId="EBI-725672">
        <id>Q9NWB7</id>
        <label>IFT57</label>
    </interactant>
    <organismsDiffer>false</organismsDiffer>
    <experiments>3</experiments>
</comment>
<comment type="interaction">
    <interactant intactId="EBI-9091197">
        <id>Q8IY31-3</id>
    </interactant>
    <interactant intactId="EBI-399080">
        <id>Q92993</id>
        <label>KAT5</label>
    </interactant>
    <organismsDiffer>false</organismsDiffer>
    <experiments>3</experiments>
</comment>
<comment type="interaction">
    <interactant intactId="EBI-9091197">
        <id>Q8IY31-3</id>
    </interactant>
    <interactant intactId="EBI-12161375">
        <id>Q8N371-3</id>
        <label>KDM8</label>
    </interactant>
    <organismsDiffer>false</organismsDiffer>
    <experiments>3</experiments>
</comment>
<comment type="interaction">
    <interactant intactId="EBI-9091197">
        <id>Q8IY31-3</id>
    </interactant>
    <interactant intactId="EBI-10975473">
        <id>O60333-2</id>
        <label>KIF1B</label>
    </interactant>
    <organismsDiffer>false</organismsDiffer>
    <experiments>3</experiments>
</comment>
<comment type="interaction">
    <interactant intactId="EBI-9091197">
        <id>Q8IY31-3</id>
    </interactant>
    <interactant intactId="EBI-948266">
        <id>O14901</id>
        <label>KLF11</label>
    </interactant>
    <organismsDiffer>false</organismsDiffer>
    <experiments>3</experiments>
</comment>
<comment type="interaction">
    <interactant intactId="EBI-9091197">
        <id>Q8IY31-3</id>
    </interactant>
    <interactant intactId="EBI-373334">
        <id>Q9Y448</id>
        <label>KNSTRN</label>
    </interactant>
    <organismsDiffer>false</organismsDiffer>
    <experiments>3</experiments>
</comment>
<comment type="interaction">
    <interactant intactId="EBI-9091197">
        <id>Q8IY31-3</id>
    </interactant>
    <interactant intactId="EBI-394659">
        <id>Q96HR3</id>
        <label>MED30</label>
    </interactant>
    <organismsDiffer>false</organismsDiffer>
    <experiments>3</experiments>
</comment>
<comment type="interaction">
    <interactant intactId="EBI-9091197">
        <id>Q8IY31-3</id>
    </interactant>
    <interactant intactId="EBI-1104552">
        <id>Q9NYP9</id>
        <label>MIS18A</label>
    </interactant>
    <organismsDiffer>false</organismsDiffer>
    <experiments>3</experiments>
</comment>
<comment type="interaction">
    <interactant intactId="EBI-9091197">
        <id>Q8IY31-3</id>
    </interactant>
    <interactant intactId="EBI-741048">
        <id>Q7Z3B4</id>
        <label>NUP54</label>
    </interactant>
    <organismsDiffer>false</organismsDiffer>
    <experiments>5</experiments>
</comment>
<comment type="interaction">
    <interactant intactId="EBI-9091197">
        <id>Q8IY31-3</id>
    </interactant>
    <interactant intactId="EBI-2811583">
        <id>Q9BVL2</id>
        <label>NUP58</label>
    </interactant>
    <organismsDiffer>false</organismsDiffer>
    <experiments>3</experiments>
</comment>
<comment type="interaction">
    <interactant intactId="EBI-9091197">
        <id>Q8IY31-3</id>
    </interactant>
    <interactant intactId="EBI-2862111">
        <id>Q96HP4</id>
        <label>OXNAD1</label>
    </interactant>
    <organismsDiffer>false</organismsDiffer>
    <experiments>3</experiments>
</comment>
<comment type="interaction">
    <interactant intactId="EBI-9091197">
        <id>Q8IY31-3</id>
    </interactant>
    <interactant intactId="EBI-10302990">
        <id>Q9BYU1</id>
        <label>PBX4</label>
    </interactant>
    <organismsDiffer>false</organismsDiffer>
    <experiments>3</experiments>
</comment>
<comment type="interaction">
    <interactant intactId="EBI-9091197">
        <id>Q8IY31-3</id>
    </interactant>
    <interactant intactId="EBI-988601">
        <id>O43933</id>
        <label>PEX1</label>
    </interactant>
    <organismsDiffer>false</organismsDiffer>
    <experiments>3</experiments>
</comment>
<comment type="interaction">
    <interactant intactId="EBI-9091197">
        <id>Q8IY31-3</id>
    </interactant>
    <interactant intactId="EBI-1048104">
        <id>O60927</id>
        <label>PPP1R11</label>
    </interactant>
    <organismsDiffer>false</organismsDiffer>
    <experiments>3</experiments>
</comment>
<comment type="interaction">
    <interactant intactId="EBI-9091197">
        <id>Q8IY31-3</id>
    </interactant>
    <interactant intactId="EBI-2933362">
        <id>Q9H2L5</id>
        <label>RASSF4</label>
    </interactant>
    <organismsDiffer>false</organismsDiffer>
    <experiments>3</experiments>
</comment>
<comment type="interaction">
    <interactant intactId="EBI-9091197">
        <id>Q8IY31-3</id>
    </interactant>
    <interactant intactId="EBI-624860">
        <id>O60239</id>
        <label>SH3BP5</label>
    </interactant>
    <organismsDiffer>false</organismsDiffer>
    <experiments>3</experiments>
</comment>
<comment type="interaction">
    <interactant intactId="EBI-9091197">
        <id>Q8IY31-3</id>
    </interactant>
    <interactant intactId="EBI-5235340">
        <id>Q7Z699</id>
        <label>SPRED1</label>
    </interactant>
    <organismsDiffer>false</organismsDiffer>
    <experiments>3</experiments>
</comment>
<comment type="interaction">
    <interactant intactId="EBI-9091197">
        <id>Q8IY31-3</id>
    </interactant>
    <interactant intactId="EBI-11958386">
        <id>Q6PIF2</id>
        <label>SYCE2</label>
    </interactant>
    <organismsDiffer>false</organismsDiffer>
    <experiments>3</experiments>
</comment>
<comment type="interaction">
    <interactant intactId="EBI-9091197">
        <id>Q8IY31-3</id>
    </interactant>
    <interactant intactId="EBI-720609">
        <id>O76024</id>
        <label>WFS1</label>
    </interactant>
    <organismsDiffer>false</organismsDiffer>
    <experiments>3</experiments>
</comment>
<comment type="interaction">
    <interactant intactId="EBI-9091197">
        <id>Q8IY31-3</id>
    </interactant>
    <interactant intactId="EBI-524753">
        <id>Q8IUH5</id>
        <label>ZDHHC17</label>
    </interactant>
    <organismsDiffer>false</organismsDiffer>
    <experiments>3</experiments>
</comment>
<comment type="subcellular location">
    <subcellularLocation>
        <location evidence="2">Golgi apparatus</location>
        <location evidence="2">cis-Golgi network</location>
    </subcellularLocation>
    <subcellularLocation>
        <location evidence="2">Cytoplasm</location>
        <location evidence="2">Cytoskeleton</location>
        <location evidence="2">Microtubule organizing center</location>
        <location evidence="2">Centrosome</location>
        <location evidence="2">Centriole</location>
    </subcellularLocation>
    <subcellularLocation>
        <location evidence="2">Cytoplasm</location>
        <location evidence="2">Cytoskeleton</location>
        <location evidence="2">Cilium basal body</location>
    </subcellularLocation>
    <subcellularLocation>
        <location evidence="2">Cell projection</location>
        <location evidence="2">Cilium</location>
    </subcellularLocation>
    <subcellularLocation>
        <location evidence="2">Cytoplasm</location>
        <location evidence="2">Cytoskeleton</location>
    </subcellularLocation>
    <subcellularLocation>
        <location evidence="2">Golgi apparatus</location>
    </subcellularLocation>
    <subcellularLocation>
        <location evidence="2">Cytoplasmic vesicle</location>
        <location evidence="2">Secretory vesicle</location>
        <location evidence="2">Acrosome</location>
    </subcellularLocation>
    <subcellularLocation>
        <location evidence="2">Cytoplasm</location>
    </subcellularLocation>
    <text evidence="2">Present at the centrosomes during the cell cycle and associated with the proximal portion of the mother centriole and the lateral aspect of the daughter centriole. Associated with basal body at the base of primary cilia. Detected in the Golgi apparatus of round spermatids and late spermatocytes. Also detected in the manchette of step 10-12 spermatids. In step 14 spermatids, found in the basal body of the sperm tail. Localization in the manchette of elongating spermatids is dependent on SPAG17.</text>
</comment>
<comment type="alternative products">
    <event type="alternative splicing"/>
    <isoform>
        <id>Q8IY31-1</id>
        <name>1</name>
        <sequence type="displayed"/>
    </isoform>
    <isoform>
        <id>Q8IY31-2</id>
        <name>2</name>
        <sequence type="described" ref="VSP_020390"/>
    </isoform>
    <isoform>
        <id>Q8IY31-3</id>
        <name>3</name>
        <sequence type="described" ref="VSP_020391"/>
    </isoform>
    <isoform>
        <id>Q8IY31-4</id>
        <name>4</name>
        <sequence type="described" ref="VSP_046026"/>
    </isoform>
</comment>
<comment type="tissue specificity">
    <text evidence="4">Expressed in almost all tissues.</text>
</comment>
<accession>Q8IY31</accession>
<accession>J3QL09</accession>
<accession>Q5GLZ2</accession>
<accession>Q9BUG5</accession>
<name>IFT20_HUMAN</name>
<feature type="chain" id="PRO_0000249303" description="Intraflagellar transport protein 20 homolog">
    <location>
        <begin position="1"/>
        <end position="132"/>
    </location>
</feature>
<feature type="region of interest" description="IFT57-binding" evidence="1">
    <location>
        <begin position="70"/>
        <end position="132"/>
    </location>
</feature>
<feature type="coiled-coil region" evidence="3">
    <location>
        <begin position="74"/>
        <end position="114"/>
    </location>
</feature>
<feature type="splice variant" id="VSP_020390" description="In isoform 2." evidence="13">
    <original>M</original>
    <variation>MTHLLLTATVTPSEQNSSREPGWETAM</variation>
    <location>
        <position position="1"/>
    </location>
</feature>
<feature type="splice variant" id="VSP_020391" description="In isoform 3." evidence="14">
    <original>AIGARNLLKSIAKQREAQQQQLQALIAEKKMQLERYRVEYEALCKVEAEQNEFIDQFIFQK</original>
    <variation>SLAVSPRLECTGAISAHCKLCLSDSSDSPTSPSRVGGTTGHRCSELAQIYSKAERSSTAATSSPNSRKENAARKVSG</variation>
    <location>
        <begin position="72"/>
        <end position="132"/>
    </location>
</feature>
<feature type="splice variant" id="VSP_046026" description="In isoform 4." evidence="12">
    <original>YRVEYEALCKVEAEQNEFIDQFIFQK</original>
    <variation>NELKISLL</variation>
    <location>
        <begin position="107"/>
        <end position="132"/>
    </location>
</feature>
<protein>
    <recommendedName>
        <fullName>Intraflagellar transport protein 20 homolog</fullName>
        <shortName>hIFT20</shortName>
    </recommendedName>
</protein>